<keyword id="KW-0007">Acetylation</keyword>
<keyword id="KW-0963">Cytoplasm</keyword>
<keyword id="KW-0206">Cytoskeleton</keyword>
<keyword id="KW-0342">GTP-binding</keyword>
<keyword id="KW-0378">Hydrolase</keyword>
<keyword id="KW-0460">Magnesium</keyword>
<keyword id="KW-0479">Metal-binding</keyword>
<keyword id="KW-0493">Microtubule</keyword>
<keyword id="KW-0547">Nucleotide-binding</keyword>
<keyword id="KW-1185">Reference proteome</keyword>
<feature type="chain" id="PRO_0000048189" description="Tubulin alpha-2 chain">
    <location>
        <begin position="1"/>
        <end position="451"/>
    </location>
</feature>
<feature type="active site" evidence="2">
    <location>
        <position position="254"/>
    </location>
</feature>
<feature type="binding site" evidence="2">
    <location>
        <position position="11"/>
    </location>
    <ligand>
        <name>GTP</name>
        <dbReference type="ChEBI" id="CHEBI:37565"/>
    </ligand>
</feature>
<feature type="binding site" evidence="2">
    <location>
        <position position="71"/>
    </location>
    <ligand>
        <name>GTP</name>
        <dbReference type="ChEBI" id="CHEBI:37565"/>
    </ligand>
</feature>
<feature type="binding site" evidence="2">
    <location>
        <position position="71"/>
    </location>
    <ligand>
        <name>Mg(2+)</name>
        <dbReference type="ChEBI" id="CHEBI:18420"/>
    </ligand>
</feature>
<feature type="binding site" evidence="2">
    <location>
        <position position="144"/>
    </location>
    <ligand>
        <name>GTP</name>
        <dbReference type="ChEBI" id="CHEBI:37565"/>
    </ligand>
</feature>
<feature type="binding site" evidence="2">
    <location>
        <position position="145"/>
    </location>
    <ligand>
        <name>GTP</name>
        <dbReference type="ChEBI" id="CHEBI:37565"/>
    </ligand>
</feature>
<feature type="binding site" evidence="2">
    <location>
        <position position="179"/>
    </location>
    <ligand>
        <name>GTP</name>
        <dbReference type="ChEBI" id="CHEBI:37565"/>
    </ligand>
</feature>
<feature type="binding site" evidence="2">
    <location>
        <position position="206"/>
    </location>
    <ligand>
        <name>GTP</name>
        <dbReference type="ChEBI" id="CHEBI:37565"/>
    </ligand>
</feature>
<feature type="binding site" evidence="2">
    <location>
        <position position="228"/>
    </location>
    <ligand>
        <name>GTP</name>
        <dbReference type="ChEBI" id="CHEBI:37565"/>
    </ligand>
</feature>
<feature type="site" description="Involved in polymerization">
    <location>
        <position position="451"/>
    </location>
</feature>
<feature type="modified residue" description="N6-acetyllysine" evidence="1">
    <location>
        <position position="40"/>
    </location>
</feature>
<name>TBA2_MAIZE</name>
<reference key="1">
    <citation type="journal article" date="1990" name="Plant Mol. Biol.">
        <title>A tandem of alpha-tubulin genes preferentially expressed in radicular tissues from Zea mays.</title>
        <authorList>
            <person name="Montoliu L."/>
            <person name="Rigau J."/>
            <person name="Puigdomenech P."/>
        </authorList>
    </citation>
    <scope>NUCLEOTIDE SEQUENCE [GENOMIC DNA]</scope>
    <source>
        <strain>cv. Wisconsin 64A</strain>
        <tissue>Root</tissue>
    </source>
</reference>
<comment type="function">
    <text>Tubulin is the major constituent of microtubules, a cylinder consisting of laterally associated linear protofilaments composed of alpha- and beta-tubulin heterodimers. Microtubules grow by the addition of GTP-tubulin dimers to the microtubule end, where a stabilizing cap forms. Below the cap, tubulin dimers are in GDP-bound state, owing to GTPase activity of alpha-tubulin.</text>
</comment>
<comment type="catalytic activity">
    <reaction evidence="2">
        <text>GTP + H2O = GDP + phosphate + H(+)</text>
        <dbReference type="Rhea" id="RHEA:19669"/>
        <dbReference type="ChEBI" id="CHEBI:15377"/>
        <dbReference type="ChEBI" id="CHEBI:15378"/>
        <dbReference type="ChEBI" id="CHEBI:37565"/>
        <dbReference type="ChEBI" id="CHEBI:43474"/>
        <dbReference type="ChEBI" id="CHEBI:58189"/>
    </reaction>
    <physiologicalReaction direction="left-to-right" evidence="2">
        <dbReference type="Rhea" id="RHEA:19670"/>
    </physiologicalReaction>
</comment>
<comment type="cofactor">
    <cofactor evidence="2">
        <name>Mg(2+)</name>
        <dbReference type="ChEBI" id="CHEBI:18420"/>
    </cofactor>
</comment>
<comment type="subunit">
    <text>Dimer of alpha and beta chains. A typical microtubule is a hollow water-filled tube with an outer diameter of 25 nm and an inner diameter of 15 nM. Alpha-beta heterodimers associate head-to-tail to form protofilaments running lengthwise along the microtubule wall with the beta-tubulin subunit facing the microtubule plus end conferring a structural polarity. Microtubules usually have 13 protofilaments but different protofilament numbers can be found in some organisms and specialized cells.</text>
</comment>
<comment type="subcellular location">
    <subcellularLocation>
        <location>Cytoplasm</location>
        <location>Cytoskeleton</location>
    </subcellularLocation>
</comment>
<comment type="PTM">
    <text evidence="1">Undergoes a tyrosination/detyrosination cycle, the cyclic removal and re-addition of a C-terminal tyrosine residue by the enzymes tubulin tyrosine carboxypeptidase (TTCP) and tubulin tyrosine ligase (TTL), respectively.</text>
</comment>
<comment type="PTM">
    <text evidence="1">Acetylation of alpha chains at Lys-40 stabilizes microtubules and affects affinity and processivity of microtubule motors. This modification has a role in multiple cellular functions, ranging from cell motility, cell cycle progression or cell differentiation to intracellular trafficking and signaling (By similarity).</text>
</comment>
<comment type="similarity">
    <text evidence="3">Belongs to the tubulin family.</text>
</comment>
<sequence length="451" mass="49731">MRECISIHIGQAGIQVGNACWELYCLEHGIQADGQMPGDKTIGGGDDAFNTFFSETGAGKHVPRAVFVDLEPTVIDEVRTGTYRQLFHPEQLISGKEDAANNFARGHYTIGKEIVDLCLDRIRKLADNCTGLQGFLVFNAVGGGTGSGLGSLLLERLSVDYGKKSKLGFTVYPSPQVSTSVVEPYNSVLSTHSLLEHTDVAILLDNEAIYDICRRSLDIERPTYTNLNRLVSQVISSLTASLRFDGALNVDVNEFQTNLVPYPRIHFMLSSYAPVISAEKAYHEQLSVAEITNSAFEPSSMMAKCDPRHGKYMACCLMYRGDVVPKDVNAAVATIKTKRTIQFVDWCPTGFKCGINYQPPSVVPGGDLAKVQRAVCMISNSTSVVEVFSRIDHKFDLMYAKRAFVHWYVGEGMEEGEFSEAREDLAALEKDYEEVGAEFDEGEEGDDGDEY</sequence>
<accession>P14641</accession>
<organism>
    <name type="scientific">Zea mays</name>
    <name type="common">Maize</name>
    <dbReference type="NCBI Taxonomy" id="4577"/>
    <lineage>
        <taxon>Eukaryota</taxon>
        <taxon>Viridiplantae</taxon>
        <taxon>Streptophyta</taxon>
        <taxon>Embryophyta</taxon>
        <taxon>Tracheophyta</taxon>
        <taxon>Spermatophyta</taxon>
        <taxon>Magnoliopsida</taxon>
        <taxon>Liliopsida</taxon>
        <taxon>Poales</taxon>
        <taxon>Poaceae</taxon>
        <taxon>PACMAD clade</taxon>
        <taxon>Panicoideae</taxon>
        <taxon>Andropogonodae</taxon>
        <taxon>Andropogoneae</taxon>
        <taxon>Tripsacinae</taxon>
        <taxon>Zea</taxon>
    </lineage>
</organism>
<protein>
    <recommendedName>
        <fullName>Tubulin alpha-2 chain</fullName>
        <ecNumber evidence="2">3.6.5.-</ecNumber>
    </recommendedName>
    <alternativeName>
        <fullName>Alpha-2-tubulin</fullName>
    </alternativeName>
</protein>
<proteinExistence type="inferred from homology"/>
<gene>
    <name type="primary">TUBA2</name>
    <name type="synonym">TUA2</name>
</gene>
<dbReference type="EC" id="3.6.5.-" evidence="2"/>
<dbReference type="EMBL" id="X15704">
    <property type="protein sequence ID" value="CAA33733.1"/>
    <property type="molecule type" value="Genomic_DNA"/>
</dbReference>
<dbReference type="PIR" id="S15772">
    <property type="entry name" value="S15772"/>
</dbReference>
<dbReference type="PIR" id="S28980">
    <property type="entry name" value="S28980"/>
</dbReference>
<dbReference type="RefSeq" id="XP_008665339.1">
    <property type="nucleotide sequence ID" value="XM_008667117.1"/>
</dbReference>
<dbReference type="SMR" id="P14641"/>
<dbReference type="FunCoup" id="P14641">
    <property type="interactions" value="1993"/>
</dbReference>
<dbReference type="STRING" id="4577.P14641"/>
<dbReference type="KEGG" id="zma:103643947"/>
<dbReference type="MaizeGDB" id="17141"/>
<dbReference type="InParanoid" id="P14641"/>
<dbReference type="OrthoDB" id="1853138at2759"/>
<dbReference type="Proteomes" id="UP000007305">
    <property type="component" value="Unplaced"/>
</dbReference>
<dbReference type="ExpressionAtlas" id="P14641">
    <property type="expression patterns" value="baseline and differential"/>
</dbReference>
<dbReference type="GO" id="GO:0005737">
    <property type="term" value="C:cytoplasm"/>
    <property type="evidence" value="ECO:0000318"/>
    <property type="project" value="GO_Central"/>
</dbReference>
<dbReference type="GO" id="GO:0005874">
    <property type="term" value="C:microtubule"/>
    <property type="evidence" value="ECO:0000318"/>
    <property type="project" value="GO_Central"/>
</dbReference>
<dbReference type="GO" id="GO:0005525">
    <property type="term" value="F:GTP binding"/>
    <property type="evidence" value="ECO:0000318"/>
    <property type="project" value="GO_Central"/>
</dbReference>
<dbReference type="GO" id="GO:0016787">
    <property type="term" value="F:hydrolase activity"/>
    <property type="evidence" value="ECO:0007669"/>
    <property type="project" value="UniProtKB-KW"/>
</dbReference>
<dbReference type="GO" id="GO:0046872">
    <property type="term" value="F:metal ion binding"/>
    <property type="evidence" value="ECO:0007669"/>
    <property type="project" value="UniProtKB-KW"/>
</dbReference>
<dbReference type="GO" id="GO:0005200">
    <property type="term" value="F:structural constituent of cytoskeleton"/>
    <property type="evidence" value="ECO:0000318"/>
    <property type="project" value="GO_Central"/>
</dbReference>
<dbReference type="GO" id="GO:0000226">
    <property type="term" value="P:microtubule cytoskeleton organization"/>
    <property type="evidence" value="ECO:0000318"/>
    <property type="project" value="GO_Central"/>
</dbReference>
<dbReference type="GO" id="GO:0000278">
    <property type="term" value="P:mitotic cell cycle"/>
    <property type="evidence" value="ECO:0000318"/>
    <property type="project" value="GO_Central"/>
</dbReference>
<dbReference type="CDD" id="cd02186">
    <property type="entry name" value="alpha_tubulin"/>
    <property type="match status" value="1"/>
</dbReference>
<dbReference type="FunFam" id="1.10.287.600:FF:000001">
    <property type="entry name" value="Tubulin alpha chain"/>
    <property type="match status" value="1"/>
</dbReference>
<dbReference type="FunFam" id="3.30.1330.20:FF:000001">
    <property type="entry name" value="Tubulin alpha chain"/>
    <property type="match status" value="1"/>
</dbReference>
<dbReference type="FunFam" id="3.40.50.1440:FF:000004">
    <property type="entry name" value="Tubulin alpha chain"/>
    <property type="match status" value="1"/>
</dbReference>
<dbReference type="Gene3D" id="1.10.287.600">
    <property type="entry name" value="Helix hairpin bin"/>
    <property type="match status" value="1"/>
</dbReference>
<dbReference type="Gene3D" id="3.30.1330.20">
    <property type="entry name" value="Tubulin/FtsZ, C-terminal domain"/>
    <property type="match status" value="1"/>
</dbReference>
<dbReference type="Gene3D" id="3.40.50.1440">
    <property type="entry name" value="Tubulin/FtsZ, GTPase domain"/>
    <property type="match status" value="1"/>
</dbReference>
<dbReference type="InterPro" id="IPR002452">
    <property type="entry name" value="Alpha_tubulin"/>
</dbReference>
<dbReference type="InterPro" id="IPR008280">
    <property type="entry name" value="Tub_FtsZ_C"/>
</dbReference>
<dbReference type="InterPro" id="IPR000217">
    <property type="entry name" value="Tubulin"/>
</dbReference>
<dbReference type="InterPro" id="IPR037103">
    <property type="entry name" value="Tubulin/FtsZ-like_C"/>
</dbReference>
<dbReference type="InterPro" id="IPR018316">
    <property type="entry name" value="Tubulin/FtsZ_2-layer-sand-dom"/>
</dbReference>
<dbReference type="InterPro" id="IPR036525">
    <property type="entry name" value="Tubulin/FtsZ_GTPase_sf"/>
</dbReference>
<dbReference type="InterPro" id="IPR023123">
    <property type="entry name" value="Tubulin_C"/>
</dbReference>
<dbReference type="InterPro" id="IPR017975">
    <property type="entry name" value="Tubulin_CS"/>
</dbReference>
<dbReference type="InterPro" id="IPR003008">
    <property type="entry name" value="Tubulin_FtsZ_GTPase"/>
</dbReference>
<dbReference type="PANTHER" id="PTHR11588">
    <property type="entry name" value="TUBULIN"/>
    <property type="match status" value="1"/>
</dbReference>
<dbReference type="Pfam" id="PF00091">
    <property type="entry name" value="Tubulin"/>
    <property type="match status" value="1"/>
</dbReference>
<dbReference type="Pfam" id="PF03953">
    <property type="entry name" value="Tubulin_C"/>
    <property type="match status" value="1"/>
</dbReference>
<dbReference type="PRINTS" id="PR01162">
    <property type="entry name" value="ALPHATUBULIN"/>
</dbReference>
<dbReference type="PRINTS" id="PR01161">
    <property type="entry name" value="TUBULIN"/>
</dbReference>
<dbReference type="SMART" id="SM00864">
    <property type="entry name" value="Tubulin"/>
    <property type="match status" value="1"/>
</dbReference>
<dbReference type="SMART" id="SM00865">
    <property type="entry name" value="Tubulin_C"/>
    <property type="match status" value="1"/>
</dbReference>
<dbReference type="SUPFAM" id="SSF55307">
    <property type="entry name" value="Tubulin C-terminal domain-like"/>
    <property type="match status" value="1"/>
</dbReference>
<dbReference type="SUPFAM" id="SSF52490">
    <property type="entry name" value="Tubulin nucleotide-binding domain-like"/>
    <property type="match status" value="1"/>
</dbReference>
<dbReference type="PROSITE" id="PS00227">
    <property type="entry name" value="TUBULIN"/>
    <property type="match status" value="1"/>
</dbReference>
<evidence type="ECO:0000250" key="1"/>
<evidence type="ECO:0000250" key="2">
    <source>
        <dbReference type="UniProtKB" id="P68363"/>
    </source>
</evidence>
<evidence type="ECO:0000305" key="3"/>